<gene>
    <name type="primary">arsB</name>
</gene>
<evidence type="ECO:0000255" key="1"/>
<evidence type="ECO:0000269" key="2">
    <source>
    </source>
</evidence>
<evidence type="ECO:0000269" key="3">
    <source>
    </source>
</evidence>
<geneLocation type="plasmid">
    <name>R773</name>
</geneLocation>
<name>ARSB1_ECOLX</name>
<keyword id="KW-0059">Arsenical resistance</keyword>
<keyword id="KW-0997">Cell inner membrane</keyword>
<keyword id="KW-1003">Cell membrane</keyword>
<keyword id="KW-0472">Membrane</keyword>
<keyword id="KW-0614">Plasmid</keyword>
<keyword id="KW-0812">Transmembrane</keyword>
<keyword id="KW-1133">Transmembrane helix</keyword>
<protein>
    <recommendedName>
        <fullName>Arsenical pump membrane protein</fullName>
    </recommendedName>
</protein>
<feature type="chain" id="PRO_0000064660" description="Arsenical pump membrane protein">
    <location>
        <begin position="1"/>
        <end position="429"/>
    </location>
</feature>
<feature type="transmembrane region" description="Helical" evidence="1">
    <location>
        <begin position="24"/>
        <end position="44"/>
    </location>
</feature>
<feature type="transmembrane region" description="Helical" evidence="1">
    <location>
        <begin position="46"/>
        <end position="66"/>
    </location>
</feature>
<feature type="transmembrane region" description="Helical" evidence="1">
    <location>
        <begin position="98"/>
        <end position="118"/>
    </location>
</feature>
<feature type="transmembrane region" description="Helical" evidence="1">
    <location>
        <begin position="121"/>
        <end position="141"/>
    </location>
</feature>
<feature type="transmembrane region" description="Helical" evidence="1">
    <location>
        <begin position="178"/>
        <end position="198"/>
    </location>
</feature>
<feature type="transmembrane region" description="Helical" evidence="1">
    <location>
        <begin position="228"/>
        <end position="248"/>
    </location>
</feature>
<feature type="transmembrane region" description="Helical" evidence="1">
    <location>
        <begin position="249"/>
        <end position="269"/>
    </location>
</feature>
<feature type="transmembrane region" description="Helical" evidence="1">
    <location>
        <begin position="274"/>
        <end position="294"/>
    </location>
</feature>
<feature type="transmembrane region" description="Helical" evidence="1">
    <location>
        <begin position="316"/>
        <end position="335"/>
    </location>
</feature>
<feature type="transmembrane region" description="Helical" evidence="1">
    <location>
        <begin position="407"/>
        <end position="427"/>
    </location>
</feature>
<sequence length="429" mass="45599">MLLAGAIFILTIVLVIWQPKGLGIGWSATLGAVLALASGVIHIADIPVVWNIVWNATATFIAVIIISLLLDESGFFEWAALHVSRWGNGRGRLLFTYIVLLGAAVAALFANDGAALILTPIVIAMLLALGFSKSTTLAFVMAAGFISDTASLPLIVSNLVNIVSADFFKLGFTEYASVMVPVDIAAIIATLVMLHLFFRKDIPPTYELARLKEPAKAIKDPATFRTGWVVLLLLLVGFFVLEPMGIPVSAIAAVGAAVLFAVAKKGHGINTGKVLRGAPWQIVIFSLGMYLVIYGLRNAGLTDYLSDVLNELADKGLWAATLGTGFLTALLSSIMNNMPTVLIGALSIDGSTATGVIKEAMIYANVIGCDLGPKITPIGSLATLLWLHVLSQKNMTITWGYYFRTGIVMTLPVLFVTLAALALRLSVTL</sequence>
<dbReference type="EMBL" id="J02591">
    <property type="protein sequence ID" value="AAA21095.1"/>
    <property type="molecule type" value="Genomic_DNA"/>
</dbReference>
<dbReference type="PIR" id="B25937">
    <property type="entry name" value="B25937"/>
</dbReference>
<dbReference type="RefSeq" id="WP_063116263.1">
    <property type="nucleotide sequence ID" value="NZ_CAJSKO010000089.1"/>
</dbReference>
<dbReference type="SMR" id="P08691"/>
<dbReference type="DIP" id="DIP-16996N"/>
<dbReference type="PATRIC" id="fig|562.10854.peg.1380"/>
<dbReference type="BioCyc" id="MetaCyc:MONOMER-21685"/>
<dbReference type="GO" id="GO:0005886">
    <property type="term" value="C:plasma membrane"/>
    <property type="evidence" value="ECO:0007669"/>
    <property type="project" value="UniProtKB-SubCell"/>
</dbReference>
<dbReference type="GO" id="GO:0042960">
    <property type="term" value="F:antimonite secondary active transmembrane transporter activity"/>
    <property type="evidence" value="ECO:0007669"/>
    <property type="project" value="TreeGrafter"/>
</dbReference>
<dbReference type="GO" id="GO:0008490">
    <property type="term" value="F:arsenite secondary active transmembrane transporter activity"/>
    <property type="evidence" value="ECO:0007669"/>
    <property type="project" value="TreeGrafter"/>
</dbReference>
<dbReference type="GO" id="GO:0046685">
    <property type="term" value="P:response to arsenic-containing substance"/>
    <property type="evidence" value="ECO:0007669"/>
    <property type="project" value="UniProtKB-KW"/>
</dbReference>
<dbReference type="CDD" id="cd01118">
    <property type="entry name" value="ArsB_permease"/>
    <property type="match status" value="1"/>
</dbReference>
<dbReference type="InterPro" id="IPR000802">
    <property type="entry name" value="Arsenical_pump_ArsB"/>
</dbReference>
<dbReference type="NCBIfam" id="TIGR00935">
    <property type="entry name" value="2a45"/>
    <property type="match status" value="1"/>
</dbReference>
<dbReference type="NCBIfam" id="NF011980">
    <property type="entry name" value="PRK15445.1"/>
    <property type="match status" value="1"/>
</dbReference>
<dbReference type="PANTHER" id="PTHR43302">
    <property type="entry name" value="TRANSPORTER ARSB-RELATED"/>
    <property type="match status" value="1"/>
</dbReference>
<dbReference type="PANTHER" id="PTHR43302:SF5">
    <property type="entry name" value="TRANSPORTER ARSB-RELATED"/>
    <property type="match status" value="1"/>
</dbReference>
<dbReference type="Pfam" id="PF02040">
    <property type="entry name" value="ArsB"/>
    <property type="match status" value="1"/>
</dbReference>
<dbReference type="PRINTS" id="PR00758">
    <property type="entry name" value="ARSENICPUMP"/>
</dbReference>
<comment type="function">
    <text evidence="2">Involved in arsenical resistance. Thought to form the channel of an arsenite pump.</text>
</comment>
<comment type="subcellular location">
    <subcellularLocation>
        <location evidence="3">Cell inner membrane</location>
        <topology evidence="3">Multi-pass membrane protein</topology>
    </subcellularLocation>
</comment>
<accession>P08691</accession>
<proteinExistence type="predicted"/>
<reference key="1">
    <citation type="journal article" date="1986" name="J. Biol. Chem.">
        <title>Nucleotide sequence of the structural genes for an anion pump. The plasmid-encoded arsenical resistance operon.</title>
        <authorList>
            <person name="Chen C.-M."/>
            <person name="Misra T.K."/>
            <person name="Silver S."/>
            <person name="Rosen B.P."/>
        </authorList>
    </citation>
    <scope>NUCLEOTIDE SEQUENCE [GENOMIC DNA]</scope>
</reference>
<reference key="2">
    <citation type="journal article" date="1989" name="Mol. Microbiol.">
        <title>Identification of the membrane component of the anion pump encoded by the arsenical resistance operon of R-factor R773.</title>
        <authorList>
            <person name="San Francisco M.J."/>
            <person name="Tisa L.S."/>
            <person name="Rosen B.P."/>
        </authorList>
    </citation>
    <scope>SUBCELLULAR LOCATION</scope>
</reference>
<reference key="3">
    <citation type="journal article" date="1990" name="J. Biol. Chem.">
        <title>Molecular characterization of an anion pump. The ArsB protein is the membrane anchor for the ArsA protein.</title>
        <authorList>
            <person name="Tisa L.S."/>
            <person name="Rosen B.P."/>
        </authorList>
    </citation>
    <scope>FUNCTION</scope>
</reference>
<reference key="4">
    <citation type="journal article" date="1990" name="Res. Microbiol.">
        <title>The plasmid-encoded arsenical resistance pump: an anion-translocating ATPase.</title>
        <authorList>
            <person name="Rosen B.P."/>
        </authorList>
    </citation>
    <scope>REVIEW</scope>
</reference>
<organism>
    <name type="scientific">Escherichia coli</name>
    <dbReference type="NCBI Taxonomy" id="562"/>
    <lineage>
        <taxon>Bacteria</taxon>
        <taxon>Pseudomonadati</taxon>
        <taxon>Pseudomonadota</taxon>
        <taxon>Gammaproteobacteria</taxon>
        <taxon>Enterobacterales</taxon>
        <taxon>Enterobacteriaceae</taxon>
        <taxon>Escherichia</taxon>
    </lineage>
</organism>